<accession>B7M908</accession>
<proteinExistence type="inferred from homology"/>
<feature type="chain" id="PRO_1000147132" description="Probable phosphatase YcdX">
    <location>
        <begin position="1"/>
        <end position="245"/>
    </location>
</feature>
<feature type="binding site" evidence="1">
    <location>
        <position position="7"/>
    </location>
    <ligand>
        <name>Zn(2+)</name>
        <dbReference type="ChEBI" id="CHEBI:29105"/>
        <label>1</label>
    </ligand>
</feature>
<feature type="binding site" evidence="1">
    <location>
        <position position="9"/>
    </location>
    <ligand>
        <name>Zn(2+)</name>
        <dbReference type="ChEBI" id="CHEBI:29105"/>
        <label>1</label>
    </ligand>
</feature>
<feature type="binding site" evidence="1">
    <location>
        <position position="15"/>
    </location>
    <ligand>
        <name>Zn(2+)</name>
        <dbReference type="ChEBI" id="CHEBI:29105"/>
        <label>2</label>
    </ligand>
</feature>
<feature type="binding site" evidence="1">
    <location>
        <position position="40"/>
    </location>
    <ligand>
        <name>Zn(2+)</name>
        <dbReference type="ChEBI" id="CHEBI:29105"/>
        <label>2</label>
    </ligand>
</feature>
<feature type="binding site" evidence="1">
    <location>
        <position position="73"/>
    </location>
    <ligand>
        <name>Zn(2+)</name>
        <dbReference type="ChEBI" id="CHEBI:29105"/>
        <label>1</label>
    </ligand>
</feature>
<feature type="binding site" evidence="1">
    <location>
        <position position="73"/>
    </location>
    <ligand>
        <name>Zn(2+)</name>
        <dbReference type="ChEBI" id="CHEBI:29105"/>
        <label>3</label>
    </ligand>
</feature>
<feature type="binding site" evidence="1">
    <location>
        <position position="101"/>
    </location>
    <ligand>
        <name>Zn(2+)</name>
        <dbReference type="ChEBI" id="CHEBI:29105"/>
        <label>3</label>
    </ligand>
</feature>
<feature type="binding site" evidence="1">
    <location>
        <position position="131"/>
    </location>
    <ligand>
        <name>Zn(2+)</name>
        <dbReference type="ChEBI" id="CHEBI:29105"/>
        <label>3</label>
    </ligand>
</feature>
<feature type="binding site" evidence="1">
    <location>
        <position position="192"/>
    </location>
    <ligand>
        <name>Zn(2+)</name>
        <dbReference type="ChEBI" id="CHEBI:29105"/>
        <label>1</label>
    </ligand>
</feature>
<feature type="binding site" evidence="1">
    <location>
        <position position="194"/>
    </location>
    <ligand>
        <name>Zn(2+)</name>
        <dbReference type="ChEBI" id="CHEBI:29105"/>
        <label>2</label>
    </ligand>
</feature>
<sequence>MYPVDLHMHTVASTHAYSTLSDYIAQAKQKGIKLFAITDHGPDMEDAPHHWHFINMRIWPRVVDGVGILRGIEANIKNVDGEIDCSGKMFDSLDLIIAGFHEPVFAPHDKATNTQAMIATIASGNVHIISHPGNPKYEIDVKAVAEAAAKHQVALEINNSSFLHSRKGSEDNCRAVAAAVRDAGGWVALGSDSHTAFTMGEFEECLKILDAVDFPPERILNVSPRRLLNFLESRGMAPIAEFADL</sequence>
<dbReference type="EC" id="3.1.3.-" evidence="1"/>
<dbReference type="EMBL" id="CU928160">
    <property type="protein sequence ID" value="CAQ97932.1"/>
    <property type="molecule type" value="Genomic_DNA"/>
</dbReference>
<dbReference type="RefSeq" id="WP_000283664.1">
    <property type="nucleotide sequence ID" value="NC_011741.1"/>
</dbReference>
<dbReference type="SMR" id="B7M908"/>
<dbReference type="GeneID" id="93776384"/>
<dbReference type="KEGG" id="ecr:ECIAI1_1068"/>
<dbReference type="HOGENOM" id="CLU_061999_0_1_6"/>
<dbReference type="GO" id="GO:0005829">
    <property type="term" value="C:cytosol"/>
    <property type="evidence" value="ECO:0007669"/>
    <property type="project" value="TreeGrafter"/>
</dbReference>
<dbReference type="GO" id="GO:0016791">
    <property type="term" value="F:phosphatase activity"/>
    <property type="evidence" value="ECO:0007669"/>
    <property type="project" value="UniProtKB-UniRule"/>
</dbReference>
<dbReference type="GO" id="GO:0008270">
    <property type="term" value="F:zinc ion binding"/>
    <property type="evidence" value="ECO:0007669"/>
    <property type="project" value="UniProtKB-UniRule"/>
</dbReference>
<dbReference type="GO" id="GO:0071978">
    <property type="term" value="P:bacterial-type flagellum-dependent swarming motility"/>
    <property type="evidence" value="ECO:0007669"/>
    <property type="project" value="TreeGrafter"/>
</dbReference>
<dbReference type="CDD" id="cd07437">
    <property type="entry name" value="PHP_HisPPase_Ycdx_like"/>
    <property type="match status" value="1"/>
</dbReference>
<dbReference type="FunFam" id="3.20.20.140:FF:000008">
    <property type="entry name" value="Probable phosphatase YcdX"/>
    <property type="match status" value="1"/>
</dbReference>
<dbReference type="Gene3D" id="3.20.20.140">
    <property type="entry name" value="Metal-dependent hydrolases"/>
    <property type="match status" value="1"/>
</dbReference>
<dbReference type="HAMAP" id="MF_01561">
    <property type="entry name" value="YcdX_phosphat"/>
    <property type="match status" value="1"/>
</dbReference>
<dbReference type="InterPro" id="IPR023710">
    <property type="entry name" value="Phosphatase_YcdX_put"/>
</dbReference>
<dbReference type="InterPro" id="IPR004013">
    <property type="entry name" value="PHP_dom"/>
</dbReference>
<dbReference type="InterPro" id="IPR050243">
    <property type="entry name" value="PHP_phosphatase"/>
</dbReference>
<dbReference type="InterPro" id="IPR003141">
    <property type="entry name" value="Pol/His_phosphatase_N"/>
</dbReference>
<dbReference type="InterPro" id="IPR016195">
    <property type="entry name" value="Pol/histidinol_Pase-like"/>
</dbReference>
<dbReference type="NCBIfam" id="NF006702">
    <property type="entry name" value="PRK09248.1"/>
    <property type="match status" value="1"/>
</dbReference>
<dbReference type="PANTHER" id="PTHR36928">
    <property type="entry name" value="PHOSPHATASE YCDX-RELATED"/>
    <property type="match status" value="1"/>
</dbReference>
<dbReference type="PANTHER" id="PTHR36928:SF1">
    <property type="entry name" value="PHOSPHATASE YCDX-RELATED"/>
    <property type="match status" value="1"/>
</dbReference>
<dbReference type="Pfam" id="PF02811">
    <property type="entry name" value="PHP"/>
    <property type="match status" value="1"/>
</dbReference>
<dbReference type="SMART" id="SM00481">
    <property type="entry name" value="POLIIIAc"/>
    <property type="match status" value="1"/>
</dbReference>
<dbReference type="SUPFAM" id="SSF89550">
    <property type="entry name" value="PHP domain-like"/>
    <property type="match status" value="1"/>
</dbReference>
<evidence type="ECO:0000255" key="1">
    <source>
        <dbReference type="HAMAP-Rule" id="MF_01561"/>
    </source>
</evidence>
<protein>
    <recommendedName>
        <fullName evidence="1">Probable phosphatase YcdX</fullName>
        <ecNumber evidence="1">3.1.3.-</ecNumber>
    </recommendedName>
</protein>
<reference key="1">
    <citation type="journal article" date="2009" name="PLoS Genet.">
        <title>Organised genome dynamics in the Escherichia coli species results in highly diverse adaptive paths.</title>
        <authorList>
            <person name="Touchon M."/>
            <person name="Hoede C."/>
            <person name="Tenaillon O."/>
            <person name="Barbe V."/>
            <person name="Baeriswyl S."/>
            <person name="Bidet P."/>
            <person name="Bingen E."/>
            <person name="Bonacorsi S."/>
            <person name="Bouchier C."/>
            <person name="Bouvet O."/>
            <person name="Calteau A."/>
            <person name="Chiapello H."/>
            <person name="Clermont O."/>
            <person name="Cruveiller S."/>
            <person name="Danchin A."/>
            <person name="Diard M."/>
            <person name="Dossat C."/>
            <person name="Karoui M.E."/>
            <person name="Frapy E."/>
            <person name="Garry L."/>
            <person name="Ghigo J.M."/>
            <person name="Gilles A.M."/>
            <person name="Johnson J."/>
            <person name="Le Bouguenec C."/>
            <person name="Lescat M."/>
            <person name="Mangenot S."/>
            <person name="Martinez-Jehanne V."/>
            <person name="Matic I."/>
            <person name="Nassif X."/>
            <person name="Oztas S."/>
            <person name="Petit M.A."/>
            <person name="Pichon C."/>
            <person name="Rouy Z."/>
            <person name="Ruf C.S."/>
            <person name="Schneider D."/>
            <person name="Tourret J."/>
            <person name="Vacherie B."/>
            <person name="Vallenet D."/>
            <person name="Medigue C."/>
            <person name="Rocha E.P.C."/>
            <person name="Denamur E."/>
        </authorList>
    </citation>
    <scope>NUCLEOTIDE SEQUENCE [LARGE SCALE GENOMIC DNA]</scope>
    <source>
        <strain>IAI1</strain>
    </source>
</reference>
<name>YCDX_ECO8A</name>
<comment type="cofactor">
    <cofactor evidence="1">
        <name>Zn(2+)</name>
        <dbReference type="ChEBI" id="CHEBI:29105"/>
    </cofactor>
    <text evidence="1">Binds 3 Zn(2+) ions per subunit.</text>
</comment>
<comment type="subunit">
    <text evidence="1">Homotrimer.</text>
</comment>
<comment type="similarity">
    <text evidence="1">Belongs to the PHP family.</text>
</comment>
<organism>
    <name type="scientific">Escherichia coli O8 (strain IAI1)</name>
    <dbReference type="NCBI Taxonomy" id="585034"/>
    <lineage>
        <taxon>Bacteria</taxon>
        <taxon>Pseudomonadati</taxon>
        <taxon>Pseudomonadota</taxon>
        <taxon>Gammaproteobacteria</taxon>
        <taxon>Enterobacterales</taxon>
        <taxon>Enterobacteriaceae</taxon>
        <taxon>Escherichia</taxon>
    </lineage>
</organism>
<keyword id="KW-0378">Hydrolase</keyword>
<keyword id="KW-0479">Metal-binding</keyword>
<keyword id="KW-0862">Zinc</keyword>
<gene>
    <name evidence="1" type="primary">ycdX</name>
    <name type="ordered locus">ECIAI1_1068</name>
</gene>